<proteinExistence type="inferred from homology"/>
<name>GLMM_XANOP</name>
<feature type="chain" id="PRO_1000201155" description="Phosphoglucosamine mutase">
    <location>
        <begin position="1"/>
        <end position="449"/>
    </location>
</feature>
<feature type="active site" description="Phosphoserine intermediate" evidence="1">
    <location>
        <position position="104"/>
    </location>
</feature>
<feature type="binding site" description="via phosphate group" evidence="1">
    <location>
        <position position="104"/>
    </location>
    <ligand>
        <name>Mg(2+)</name>
        <dbReference type="ChEBI" id="CHEBI:18420"/>
    </ligand>
</feature>
<feature type="binding site" evidence="1">
    <location>
        <position position="243"/>
    </location>
    <ligand>
        <name>Mg(2+)</name>
        <dbReference type="ChEBI" id="CHEBI:18420"/>
    </ligand>
</feature>
<feature type="binding site" evidence="1">
    <location>
        <position position="245"/>
    </location>
    <ligand>
        <name>Mg(2+)</name>
        <dbReference type="ChEBI" id="CHEBI:18420"/>
    </ligand>
</feature>
<feature type="binding site" evidence="1">
    <location>
        <position position="247"/>
    </location>
    <ligand>
        <name>Mg(2+)</name>
        <dbReference type="ChEBI" id="CHEBI:18420"/>
    </ligand>
</feature>
<feature type="modified residue" description="Phosphoserine" evidence="1">
    <location>
        <position position="104"/>
    </location>
</feature>
<protein>
    <recommendedName>
        <fullName evidence="1">Phosphoglucosamine mutase</fullName>
        <ecNumber evidence="1">5.4.2.10</ecNumber>
    </recommendedName>
</protein>
<reference key="1">
    <citation type="journal article" date="2008" name="BMC Genomics">
        <title>Genome sequence and rapid evolution of the rice pathogen Xanthomonas oryzae pv. oryzae PXO99A.</title>
        <authorList>
            <person name="Salzberg S.L."/>
            <person name="Sommer D.D."/>
            <person name="Schatz M.C."/>
            <person name="Phillippy A.M."/>
            <person name="Rabinowicz P.D."/>
            <person name="Tsuge S."/>
            <person name="Furutani A."/>
            <person name="Ochiai H."/>
            <person name="Delcher A.L."/>
            <person name="Kelley D."/>
            <person name="Madupu R."/>
            <person name="Puiu D."/>
            <person name="Radune D."/>
            <person name="Shumway M."/>
            <person name="Trapnell C."/>
            <person name="Aparna G."/>
            <person name="Jha G."/>
            <person name="Pandey A."/>
            <person name="Patil P.B."/>
            <person name="Ishihara H."/>
            <person name="Meyer D.F."/>
            <person name="Szurek B."/>
            <person name="Verdier V."/>
            <person name="Koebnik R."/>
            <person name="Dow J.M."/>
            <person name="Ryan R.P."/>
            <person name="Hirata H."/>
            <person name="Tsuyumu S."/>
            <person name="Won Lee S."/>
            <person name="Seo Y.-S."/>
            <person name="Sriariyanum M."/>
            <person name="Ronald P.C."/>
            <person name="Sonti R.V."/>
            <person name="Van Sluys M.-A."/>
            <person name="Leach J.E."/>
            <person name="White F.F."/>
            <person name="Bogdanove A.J."/>
        </authorList>
    </citation>
    <scope>NUCLEOTIDE SEQUENCE [LARGE SCALE GENOMIC DNA]</scope>
    <source>
        <strain>PXO99A</strain>
    </source>
</reference>
<sequence length="449" mass="47328">MSARKYFGTDGIRGRVGQGVISADFVLRLGNALGRVLTQIRGKRPLVLIGKDTRISGYMFEAALEAGLVAAGADVQLIGPMPTPAIAFLTSTLRADAGVVISASHNPHYDNGIKFFSAEGEKLDDATEAAIEAALDAPFHTVESERLGKAIRTRDAIGRYIEFCKASVARGFTLKWLKMVLDCAHGATYHIAPMLFRELGAEVVVIGAAPDGLNINAGVGSTHIDNLAAKVREYGAHLGIAFDGDGDRVLMADDQGNPVDGDDLLYVLARSWQASGRLTGTVVGTLMTNYGLEQALAALNIPFQRAKVGDRYVHQALVEGGGTLGGETSGHLLCLDRATTGDGIVSALQVLEALGRDGHSLRKALSSLSKVPQKTVNVRLDGGAAKAIVEAANVQQALQQAQAAVQGRGRAFLRPSGTEPVVRVTVEADDARLMQDTLDRLSGAVRDAA</sequence>
<comment type="function">
    <text evidence="1">Catalyzes the conversion of glucosamine-6-phosphate to glucosamine-1-phosphate.</text>
</comment>
<comment type="catalytic activity">
    <reaction evidence="1">
        <text>alpha-D-glucosamine 1-phosphate = D-glucosamine 6-phosphate</text>
        <dbReference type="Rhea" id="RHEA:23424"/>
        <dbReference type="ChEBI" id="CHEBI:58516"/>
        <dbReference type="ChEBI" id="CHEBI:58725"/>
        <dbReference type="EC" id="5.4.2.10"/>
    </reaction>
</comment>
<comment type="cofactor">
    <cofactor evidence="1">
        <name>Mg(2+)</name>
        <dbReference type="ChEBI" id="CHEBI:18420"/>
    </cofactor>
    <text evidence="1">Binds 1 Mg(2+) ion per subunit.</text>
</comment>
<comment type="PTM">
    <text evidence="1">Activated by phosphorylation.</text>
</comment>
<comment type="similarity">
    <text evidence="1">Belongs to the phosphohexose mutase family.</text>
</comment>
<gene>
    <name evidence="1" type="primary">glmM</name>
    <name type="ordered locus">PXO_01274</name>
</gene>
<organism>
    <name type="scientific">Xanthomonas oryzae pv. oryzae (strain PXO99A)</name>
    <dbReference type="NCBI Taxonomy" id="360094"/>
    <lineage>
        <taxon>Bacteria</taxon>
        <taxon>Pseudomonadati</taxon>
        <taxon>Pseudomonadota</taxon>
        <taxon>Gammaproteobacteria</taxon>
        <taxon>Lysobacterales</taxon>
        <taxon>Lysobacteraceae</taxon>
        <taxon>Xanthomonas</taxon>
    </lineage>
</organism>
<keyword id="KW-0413">Isomerase</keyword>
<keyword id="KW-0460">Magnesium</keyword>
<keyword id="KW-0479">Metal-binding</keyword>
<keyword id="KW-0597">Phosphoprotein</keyword>
<evidence type="ECO:0000255" key="1">
    <source>
        <dbReference type="HAMAP-Rule" id="MF_01554"/>
    </source>
</evidence>
<dbReference type="EC" id="5.4.2.10" evidence="1"/>
<dbReference type="EMBL" id="CP000967">
    <property type="protein sequence ID" value="ACD60107.1"/>
    <property type="molecule type" value="Genomic_DNA"/>
</dbReference>
<dbReference type="RefSeq" id="WP_011259759.1">
    <property type="nucleotide sequence ID" value="NC_010717.2"/>
</dbReference>
<dbReference type="SMR" id="B2SVN3"/>
<dbReference type="KEGG" id="xop:PXO_01274"/>
<dbReference type="eggNOG" id="COG1109">
    <property type="taxonomic scope" value="Bacteria"/>
</dbReference>
<dbReference type="HOGENOM" id="CLU_016950_7_0_6"/>
<dbReference type="Proteomes" id="UP000001740">
    <property type="component" value="Chromosome"/>
</dbReference>
<dbReference type="GO" id="GO:0005829">
    <property type="term" value="C:cytosol"/>
    <property type="evidence" value="ECO:0007669"/>
    <property type="project" value="TreeGrafter"/>
</dbReference>
<dbReference type="GO" id="GO:0000287">
    <property type="term" value="F:magnesium ion binding"/>
    <property type="evidence" value="ECO:0007669"/>
    <property type="project" value="UniProtKB-UniRule"/>
</dbReference>
<dbReference type="GO" id="GO:0008966">
    <property type="term" value="F:phosphoglucosamine mutase activity"/>
    <property type="evidence" value="ECO:0007669"/>
    <property type="project" value="UniProtKB-UniRule"/>
</dbReference>
<dbReference type="GO" id="GO:0004615">
    <property type="term" value="F:phosphomannomutase activity"/>
    <property type="evidence" value="ECO:0007669"/>
    <property type="project" value="TreeGrafter"/>
</dbReference>
<dbReference type="GO" id="GO:0005975">
    <property type="term" value="P:carbohydrate metabolic process"/>
    <property type="evidence" value="ECO:0007669"/>
    <property type="project" value="InterPro"/>
</dbReference>
<dbReference type="GO" id="GO:0009252">
    <property type="term" value="P:peptidoglycan biosynthetic process"/>
    <property type="evidence" value="ECO:0007669"/>
    <property type="project" value="TreeGrafter"/>
</dbReference>
<dbReference type="GO" id="GO:0006048">
    <property type="term" value="P:UDP-N-acetylglucosamine biosynthetic process"/>
    <property type="evidence" value="ECO:0007669"/>
    <property type="project" value="TreeGrafter"/>
</dbReference>
<dbReference type="CDD" id="cd05802">
    <property type="entry name" value="GlmM"/>
    <property type="match status" value="1"/>
</dbReference>
<dbReference type="FunFam" id="3.30.310.50:FF:000001">
    <property type="entry name" value="Phosphoglucosamine mutase"/>
    <property type="match status" value="1"/>
</dbReference>
<dbReference type="FunFam" id="3.40.120.10:FF:000001">
    <property type="entry name" value="Phosphoglucosamine mutase"/>
    <property type="match status" value="1"/>
</dbReference>
<dbReference type="FunFam" id="3.40.120.10:FF:000003">
    <property type="entry name" value="Phosphoglucosamine mutase"/>
    <property type="match status" value="1"/>
</dbReference>
<dbReference type="Gene3D" id="3.40.120.10">
    <property type="entry name" value="Alpha-D-Glucose-1,6-Bisphosphate, subunit A, domain 3"/>
    <property type="match status" value="3"/>
</dbReference>
<dbReference type="Gene3D" id="3.30.310.50">
    <property type="entry name" value="Alpha-D-phosphohexomutase, C-terminal domain"/>
    <property type="match status" value="1"/>
</dbReference>
<dbReference type="HAMAP" id="MF_01554_B">
    <property type="entry name" value="GlmM_B"/>
    <property type="match status" value="1"/>
</dbReference>
<dbReference type="InterPro" id="IPR005844">
    <property type="entry name" value="A-D-PHexomutase_a/b/a-I"/>
</dbReference>
<dbReference type="InterPro" id="IPR016055">
    <property type="entry name" value="A-D-PHexomutase_a/b/a-I/II/III"/>
</dbReference>
<dbReference type="InterPro" id="IPR005845">
    <property type="entry name" value="A-D-PHexomutase_a/b/a-II"/>
</dbReference>
<dbReference type="InterPro" id="IPR005846">
    <property type="entry name" value="A-D-PHexomutase_a/b/a-III"/>
</dbReference>
<dbReference type="InterPro" id="IPR005843">
    <property type="entry name" value="A-D-PHexomutase_C"/>
</dbReference>
<dbReference type="InterPro" id="IPR036900">
    <property type="entry name" value="A-D-PHexomutase_C_sf"/>
</dbReference>
<dbReference type="InterPro" id="IPR016066">
    <property type="entry name" value="A-D-PHexomutase_CS"/>
</dbReference>
<dbReference type="InterPro" id="IPR005841">
    <property type="entry name" value="Alpha-D-phosphohexomutase_SF"/>
</dbReference>
<dbReference type="InterPro" id="IPR006352">
    <property type="entry name" value="GlmM_bact"/>
</dbReference>
<dbReference type="InterPro" id="IPR050060">
    <property type="entry name" value="Phosphoglucosamine_mutase"/>
</dbReference>
<dbReference type="NCBIfam" id="TIGR01455">
    <property type="entry name" value="glmM"/>
    <property type="match status" value="1"/>
</dbReference>
<dbReference type="NCBIfam" id="NF008139">
    <property type="entry name" value="PRK10887.1"/>
    <property type="match status" value="1"/>
</dbReference>
<dbReference type="PANTHER" id="PTHR42946:SF1">
    <property type="entry name" value="PHOSPHOGLUCOMUTASE (ALPHA-D-GLUCOSE-1,6-BISPHOSPHATE-DEPENDENT)"/>
    <property type="match status" value="1"/>
</dbReference>
<dbReference type="PANTHER" id="PTHR42946">
    <property type="entry name" value="PHOSPHOHEXOSE MUTASE"/>
    <property type="match status" value="1"/>
</dbReference>
<dbReference type="Pfam" id="PF02878">
    <property type="entry name" value="PGM_PMM_I"/>
    <property type="match status" value="1"/>
</dbReference>
<dbReference type="Pfam" id="PF02879">
    <property type="entry name" value="PGM_PMM_II"/>
    <property type="match status" value="1"/>
</dbReference>
<dbReference type="Pfam" id="PF02880">
    <property type="entry name" value="PGM_PMM_III"/>
    <property type="match status" value="1"/>
</dbReference>
<dbReference type="Pfam" id="PF00408">
    <property type="entry name" value="PGM_PMM_IV"/>
    <property type="match status" value="1"/>
</dbReference>
<dbReference type="PRINTS" id="PR00509">
    <property type="entry name" value="PGMPMM"/>
</dbReference>
<dbReference type="SUPFAM" id="SSF55957">
    <property type="entry name" value="Phosphoglucomutase, C-terminal domain"/>
    <property type="match status" value="1"/>
</dbReference>
<dbReference type="SUPFAM" id="SSF53738">
    <property type="entry name" value="Phosphoglucomutase, first 3 domains"/>
    <property type="match status" value="3"/>
</dbReference>
<dbReference type="PROSITE" id="PS00710">
    <property type="entry name" value="PGM_PMM"/>
    <property type="match status" value="1"/>
</dbReference>
<accession>B2SVN3</accession>